<feature type="chain" id="PRO_1000196763" description="Bifunctional protein FolD">
    <location>
        <begin position="1"/>
        <end position="284"/>
    </location>
</feature>
<feature type="binding site" evidence="1">
    <location>
        <begin position="166"/>
        <end position="168"/>
    </location>
    <ligand>
        <name>NADP(+)</name>
        <dbReference type="ChEBI" id="CHEBI:58349"/>
    </ligand>
</feature>
<feature type="binding site" evidence="1">
    <location>
        <position position="191"/>
    </location>
    <ligand>
        <name>NADP(+)</name>
        <dbReference type="ChEBI" id="CHEBI:58349"/>
    </ligand>
</feature>
<comment type="function">
    <text evidence="1">Catalyzes the oxidation of 5,10-methylenetetrahydrofolate to 5,10-methenyltetrahydrofolate and then the hydrolysis of 5,10-methenyltetrahydrofolate to 10-formyltetrahydrofolate.</text>
</comment>
<comment type="catalytic activity">
    <reaction evidence="1">
        <text>(6R)-5,10-methylene-5,6,7,8-tetrahydrofolate + NADP(+) = (6R)-5,10-methenyltetrahydrofolate + NADPH</text>
        <dbReference type="Rhea" id="RHEA:22812"/>
        <dbReference type="ChEBI" id="CHEBI:15636"/>
        <dbReference type="ChEBI" id="CHEBI:57455"/>
        <dbReference type="ChEBI" id="CHEBI:57783"/>
        <dbReference type="ChEBI" id="CHEBI:58349"/>
        <dbReference type="EC" id="1.5.1.5"/>
    </reaction>
</comment>
<comment type="catalytic activity">
    <reaction evidence="1">
        <text>(6R)-5,10-methenyltetrahydrofolate + H2O = (6R)-10-formyltetrahydrofolate + H(+)</text>
        <dbReference type="Rhea" id="RHEA:23700"/>
        <dbReference type="ChEBI" id="CHEBI:15377"/>
        <dbReference type="ChEBI" id="CHEBI:15378"/>
        <dbReference type="ChEBI" id="CHEBI:57455"/>
        <dbReference type="ChEBI" id="CHEBI:195366"/>
        <dbReference type="EC" id="3.5.4.9"/>
    </reaction>
</comment>
<comment type="pathway">
    <text evidence="1">One-carbon metabolism; tetrahydrofolate interconversion.</text>
</comment>
<comment type="subunit">
    <text evidence="1">Homodimer.</text>
</comment>
<comment type="similarity">
    <text evidence="1">Belongs to the tetrahydrofolate dehydrogenase/cyclohydrolase family.</text>
</comment>
<keyword id="KW-0028">Amino-acid biosynthesis</keyword>
<keyword id="KW-0368">Histidine biosynthesis</keyword>
<keyword id="KW-0378">Hydrolase</keyword>
<keyword id="KW-0486">Methionine biosynthesis</keyword>
<keyword id="KW-0511">Multifunctional enzyme</keyword>
<keyword id="KW-0521">NADP</keyword>
<keyword id="KW-0554">One-carbon metabolism</keyword>
<keyword id="KW-0560">Oxidoreductase</keyword>
<keyword id="KW-0658">Purine biosynthesis</keyword>
<keyword id="KW-1185">Reference proteome</keyword>
<organism>
    <name type="scientific">Delftia acidovorans (strain DSM 14801 / SPH-1)</name>
    <dbReference type="NCBI Taxonomy" id="398578"/>
    <lineage>
        <taxon>Bacteria</taxon>
        <taxon>Pseudomonadati</taxon>
        <taxon>Pseudomonadota</taxon>
        <taxon>Betaproteobacteria</taxon>
        <taxon>Burkholderiales</taxon>
        <taxon>Comamonadaceae</taxon>
        <taxon>Delftia</taxon>
    </lineage>
</organism>
<evidence type="ECO:0000255" key="1">
    <source>
        <dbReference type="HAMAP-Rule" id="MF_01576"/>
    </source>
</evidence>
<proteinExistence type="inferred from homology"/>
<protein>
    <recommendedName>
        <fullName evidence="1">Bifunctional protein FolD</fullName>
    </recommendedName>
    <domain>
        <recommendedName>
            <fullName evidence="1">Methylenetetrahydrofolate dehydrogenase</fullName>
            <ecNumber evidence="1">1.5.1.5</ecNumber>
        </recommendedName>
    </domain>
    <domain>
        <recommendedName>
            <fullName evidence="1">Methenyltetrahydrofolate cyclohydrolase</fullName>
            <ecNumber evidence="1">3.5.4.9</ecNumber>
        </recommendedName>
    </domain>
</protein>
<accession>A9BWT7</accession>
<gene>
    <name evidence="1" type="primary">folD</name>
    <name type="ordered locus">Daci_3983</name>
</gene>
<reference key="1">
    <citation type="submission" date="2007-11" db="EMBL/GenBank/DDBJ databases">
        <title>Complete sequence of Delftia acidovorans DSM 14801 / SPH-1.</title>
        <authorList>
            <person name="Copeland A."/>
            <person name="Lucas S."/>
            <person name="Lapidus A."/>
            <person name="Barry K."/>
            <person name="Glavina del Rio T."/>
            <person name="Dalin E."/>
            <person name="Tice H."/>
            <person name="Pitluck S."/>
            <person name="Lowry S."/>
            <person name="Clum A."/>
            <person name="Schmutz J."/>
            <person name="Larimer F."/>
            <person name="Land M."/>
            <person name="Hauser L."/>
            <person name="Kyrpides N."/>
            <person name="Kim E."/>
            <person name="Schleheck D."/>
            <person name="Richardson P."/>
        </authorList>
    </citation>
    <scope>NUCLEOTIDE SEQUENCE [LARGE SCALE GENOMIC DNA]</scope>
    <source>
        <strain>DSM 14801 / SPH-1</strain>
    </source>
</reference>
<sequence>MTAQLIDGNALSRQLRAEVAQRATALKARGTTPGLAVVLVGDNPASQVYVRNKVKACEDAGFHSVLEKYDASMTEAELLARVEALNNDPSIHGILVQLPLPAHIDDHKVIETISPLKDVDGFHVASAGALMVGEVGFKACTPYGCMKMLESIGMKDLRGKHAVVIGRSNIVGKPMAMMLLAANATVTICHSGTADLAAMTRQADIVVAAVGKRNVLTADMCKPGAVVIDVGMNRNDEGKLCGDVDFDGVKEVAGFITPVPGGVGPMTITMLLVNTMEAAERAAG</sequence>
<name>FOLD_DELAS</name>
<dbReference type="EC" id="1.5.1.5" evidence="1"/>
<dbReference type="EC" id="3.5.4.9" evidence="1"/>
<dbReference type="EMBL" id="CP000884">
    <property type="protein sequence ID" value="ABX36614.1"/>
    <property type="molecule type" value="Genomic_DNA"/>
</dbReference>
<dbReference type="RefSeq" id="WP_012205808.1">
    <property type="nucleotide sequence ID" value="NC_010002.1"/>
</dbReference>
<dbReference type="SMR" id="A9BWT7"/>
<dbReference type="STRING" id="398578.Daci_3983"/>
<dbReference type="GeneID" id="24115552"/>
<dbReference type="KEGG" id="dac:Daci_3983"/>
<dbReference type="eggNOG" id="COG0190">
    <property type="taxonomic scope" value="Bacteria"/>
</dbReference>
<dbReference type="HOGENOM" id="CLU_034045_2_1_4"/>
<dbReference type="UniPathway" id="UPA00193"/>
<dbReference type="Proteomes" id="UP000000784">
    <property type="component" value="Chromosome"/>
</dbReference>
<dbReference type="GO" id="GO:0005829">
    <property type="term" value="C:cytosol"/>
    <property type="evidence" value="ECO:0007669"/>
    <property type="project" value="TreeGrafter"/>
</dbReference>
<dbReference type="GO" id="GO:0004477">
    <property type="term" value="F:methenyltetrahydrofolate cyclohydrolase activity"/>
    <property type="evidence" value="ECO:0007669"/>
    <property type="project" value="UniProtKB-UniRule"/>
</dbReference>
<dbReference type="GO" id="GO:0004488">
    <property type="term" value="F:methylenetetrahydrofolate dehydrogenase (NADP+) activity"/>
    <property type="evidence" value="ECO:0007669"/>
    <property type="project" value="UniProtKB-UniRule"/>
</dbReference>
<dbReference type="GO" id="GO:0000105">
    <property type="term" value="P:L-histidine biosynthetic process"/>
    <property type="evidence" value="ECO:0007669"/>
    <property type="project" value="UniProtKB-KW"/>
</dbReference>
<dbReference type="GO" id="GO:0009086">
    <property type="term" value="P:methionine biosynthetic process"/>
    <property type="evidence" value="ECO:0007669"/>
    <property type="project" value="UniProtKB-KW"/>
</dbReference>
<dbReference type="GO" id="GO:0006164">
    <property type="term" value="P:purine nucleotide biosynthetic process"/>
    <property type="evidence" value="ECO:0007669"/>
    <property type="project" value="UniProtKB-KW"/>
</dbReference>
<dbReference type="GO" id="GO:0035999">
    <property type="term" value="P:tetrahydrofolate interconversion"/>
    <property type="evidence" value="ECO:0007669"/>
    <property type="project" value="UniProtKB-UniRule"/>
</dbReference>
<dbReference type="CDD" id="cd01080">
    <property type="entry name" value="NAD_bind_m-THF_DH_Cyclohyd"/>
    <property type="match status" value="1"/>
</dbReference>
<dbReference type="FunFam" id="3.40.50.720:FF:000094">
    <property type="entry name" value="Bifunctional protein FolD"/>
    <property type="match status" value="1"/>
</dbReference>
<dbReference type="FunFam" id="3.40.50.10860:FF:000005">
    <property type="entry name" value="C-1-tetrahydrofolate synthase, cytoplasmic, putative"/>
    <property type="match status" value="1"/>
</dbReference>
<dbReference type="Gene3D" id="3.40.50.10860">
    <property type="entry name" value="Leucine Dehydrogenase, chain A, domain 1"/>
    <property type="match status" value="1"/>
</dbReference>
<dbReference type="Gene3D" id="3.40.50.720">
    <property type="entry name" value="NAD(P)-binding Rossmann-like Domain"/>
    <property type="match status" value="1"/>
</dbReference>
<dbReference type="HAMAP" id="MF_01576">
    <property type="entry name" value="THF_DHG_CYH"/>
    <property type="match status" value="1"/>
</dbReference>
<dbReference type="InterPro" id="IPR046346">
    <property type="entry name" value="Aminoacid_DH-like_N_sf"/>
</dbReference>
<dbReference type="InterPro" id="IPR036291">
    <property type="entry name" value="NAD(P)-bd_dom_sf"/>
</dbReference>
<dbReference type="InterPro" id="IPR000672">
    <property type="entry name" value="THF_DH/CycHdrlase"/>
</dbReference>
<dbReference type="InterPro" id="IPR020630">
    <property type="entry name" value="THF_DH/CycHdrlase_cat_dom"/>
</dbReference>
<dbReference type="InterPro" id="IPR020867">
    <property type="entry name" value="THF_DH/CycHdrlase_CS"/>
</dbReference>
<dbReference type="InterPro" id="IPR020631">
    <property type="entry name" value="THF_DH/CycHdrlase_NAD-bd_dom"/>
</dbReference>
<dbReference type="NCBIfam" id="NF008058">
    <property type="entry name" value="PRK10792.1"/>
    <property type="match status" value="1"/>
</dbReference>
<dbReference type="NCBIfam" id="NF010783">
    <property type="entry name" value="PRK14186.1"/>
    <property type="match status" value="1"/>
</dbReference>
<dbReference type="NCBIfam" id="NF010786">
    <property type="entry name" value="PRK14189.1"/>
    <property type="match status" value="1"/>
</dbReference>
<dbReference type="PANTHER" id="PTHR48099:SF5">
    <property type="entry name" value="C-1-TETRAHYDROFOLATE SYNTHASE, CYTOPLASMIC"/>
    <property type="match status" value="1"/>
</dbReference>
<dbReference type="PANTHER" id="PTHR48099">
    <property type="entry name" value="C-1-TETRAHYDROFOLATE SYNTHASE, CYTOPLASMIC-RELATED"/>
    <property type="match status" value="1"/>
</dbReference>
<dbReference type="Pfam" id="PF00763">
    <property type="entry name" value="THF_DHG_CYH"/>
    <property type="match status" value="1"/>
</dbReference>
<dbReference type="Pfam" id="PF02882">
    <property type="entry name" value="THF_DHG_CYH_C"/>
    <property type="match status" value="1"/>
</dbReference>
<dbReference type="PRINTS" id="PR00085">
    <property type="entry name" value="THFDHDRGNASE"/>
</dbReference>
<dbReference type="SUPFAM" id="SSF53223">
    <property type="entry name" value="Aminoacid dehydrogenase-like, N-terminal domain"/>
    <property type="match status" value="1"/>
</dbReference>
<dbReference type="SUPFAM" id="SSF51735">
    <property type="entry name" value="NAD(P)-binding Rossmann-fold domains"/>
    <property type="match status" value="1"/>
</dbReference>
<dbReference type="PROSITE" id="PS00766">
    <property type="entry name" value="THF_DHG_CYH_1"/>
    <property type="match status" value="1"/>
</dbReference>
<dbReference type="PROSITE" id="PS00767">
    <property type="entry name" value="THF_DHG_CYH_2"/>
    <property type="match status" value="1"/>
</dbReference>